<proteinExistence type="inferred from homology"/>
<feature type="transit peptide" description="Chloroplast" evidence="1">
    <location>
        <begin position="1"/>
        <end position="54"/>
    </location>
</feature>
<feature type="chain" id="PRO_0000031504" description="Ribulose bisphosphate carboxylase small subunit, chloroplastic" evidence="1">
    <location>
        <begin position="55"/>
        <end position="178"/>
    </location>
</feature>
<comment type="function">
    <text evidence="1">RuBisCO catalyzes two reactions: the carboxylation of D-ribulose 1,5-bisphosphate, the primary event in carbon dioxide fixation, as well as the oxidative fragmentation of the pentose substrate. Both reactions occur simultaneously and in competition at the same active site. Although the small subunit is not catalytic it is essential for maximal activity.</text>
</comment>
<comment type="subunit">
    <text evidence="1">Heterohexadecamer of 8 large and 8 small subunits.</text>
</comment>
<comment type="subcellular location">
    <subcellularLocation>
        <location evidence="1">Plastid</location>
        <location evidence="1">Chloroplast</location>
    </subcellularLocation>
</comment>
<comment type="miscellaneous">
    <text evidence="1">The basic functional RuBisCO is composed of a large chain homodimer in a 'head-to-tail' conformation. In form I RuBisCO this homodimer is arranged in a barrel-like tetramer with the small subunits forming a tetrameric 'cap' on each end of the 'barrel'.</text>
</comment>
<comment type="similarity">
    <text evidence="1">Belongs to the RuBisCO small chain family.</text>
</comment>
<reference key="1">
    <citation type="submission" date="1995-12" db="EMBL/GenBank/DDBJ databases">
        <authorList>
            <person name="Cao K."/>
            <person name="Ji J."/>
            <person name="Gu Q."/>
        </authorList>
    </citation>
    <scope>NUCLEOTIDE SEQUENCE [GENOMIC DNA]</scope>
    <source>
        <strain>PW0043</strain>
        <tissue>Leaf</tissue>
    </source>
</reference>
<dbReference type="EMBL" id="U39858">
    <property type="protein sequence ID" value="AAA82071.1"/>
    <property type="molecule type" value="Genomic_DNA"/>
</dbReference>
<dbReference type="SMR" id="Q42823"/>
<dbReference type="GO" id="GO:0009507">
    <property type="term" value="C:chloroplast"/>
    <property type="evidence" value="ECO:0007669"/>
    <property type="project" value="UniProtKB-SubCell"/>
</dbReference>
<dbReference type="GO" id="GO:0016984">
    <property type="term" value="F:ribulose-bisphosphate carboxylase activity"/>
    <property type="evidence" value="ECO:0007669"/>
    <property type="project" value="UniProtKB-UniRule"/>
</dbReference>
<dbReference type="GO" id="GO:0009853">
    <property type="term" value="P:photorespiration"/>
    <property type="evidence" value="ECO:0007669"/>
    <property type="project" value="UniProtKB-KW"/>
</dbReference>
<dbReference type="GO" id="GO:0019253">
    <property type="term" value="P:reductive pentose-phosphate cycle"/>
    <property type="evidence" value="ECO:0007669"/>
    <property type="project" value="UniProtKB-UniRule"/>
</dbReference>
<dbReference type="CDD" id="cd03527">
    <property type="entry name" value="RuBisCO_small"/>
    <property type="match status" value="1"/>
</dbReference>
<dbReference type="FunFam" id="3.30.190.10:FF:000001">
    <property type="entry name" value="Ribulose bisphosphate carboxylase small chain, chloroplastic"/>
    <property type="match status" value="1"/>
</dbReference>
<dbReference type="Gene3D" id="3.30.190.10">
    <property type="entry name" value="Ribulose bisphosphate carboxylase, small subunit"/>
    <property type="match status" value="1"/>
</dbReference>
<dbReference type="HAMAP" id="MF_00859">
    <property type="entry name" value="RuBisCO_S_bact"/>
    <property type="match status" value="1"/>
</dbReference>
<dbReference type="InterPro" id="IPR024681">
    <property type="entry name" value="RuBisCO_ssu"/>
</dbReference>
<dbReference type="InterPro" id="IPR000894">
    <property type="entry name" value="RuBisCO_ssu_dom"/>
</dbReference>
<dbReference type="InterPro" id="IPR024680">
    <property type="entry name" value="RuBisCO_ssu_N"/>
</dbReference>
<dbReference type="InterPro" id="IPR036385">
    <property type="entry name" value="RuBisCO_ssu_sf"/>
</dbReference>
<dbReference type="PANTHER" id="PTHR31262">
    <property type="entry name" value="RIBULOSE BISPHOSPHATE CARBOXYLASE SMALL CHAIN 1, CHLOROPLASTIC"/>
    <property type="match status" value="1"/>
</dbReference>
<dbReference type="PANTHER" id="PTHR31262:SF19">
    <property type="entry name" value="RIBULOSE BISPHOSPHATE CARBOXYLASE SMALL SUBUNIT, CHLOROPLASTIC 2"/>
    <property type="match status" value="1"/>
</dbReference>
<dbReference type="Pfam" id="PF12338">
    <property type="entry name" value="RbcS"/>
    <property type="match status" value="1"/>
</dbReference>
<dbReference type="Pfam" id="PF00101">
    <property type="entry name" value="RuBisCO_small"/>
    <property type="match status" value="1"/>
</dbReference>
<dbReference type="PRINTS" id="PR00152">
    <property type="entry name" value="RUBISCOSMALL"/>
</dbReference>
<dbReference type="SMART" id="SM00961">
    <property type="entry name" value="RuBisCO_small"/>
    <property type="match status" value="1"/>
</dbReference>
<dbReference type="SUPFAM" id="SSF55239">
    <property type="entry name" value="RuBisCO, small subunit"/>
    <property type="match status" value="1"/>
</dbReference>
<keyword id="KW-0113">Calvin cycle</keyword>
<keyword id="KW-0120">Carbon dioxide fixation</keyword>
<keyword id="KW-0150">Chloroplast</keyword>
<keyword id="KW-0601">Photorespiration</keyword>
<keyword id="KW-0602">Photosynthesis</keyword>
<keyword id="KW-0934">Plastid</keyword>
<keyword id="KW-0809">Transit peptide</keyword>
<accession>Q42823</accession>
<gene>
    <name evidence="1" type="primary">RBCS</name>
</gene>
<name>RBS_GLYTA</name>
<protein>
    <recommendedName>
        <fullName evidence="1">Ribulose bisphosphate carboxylase small subunit, chloroplastic</fullName>
        <shortName evidence="1">RuBisCO small subunit</shortName>
    </recommendedName>
</protein>
<organism>
    <name type="scientific">Glycine tabacina</name>
    <dbReference type="NCBI Taxonomy" id="44016"/>
    <lineage>
        <taxon>Eukaryota</taxon>
        <taxon>Viridiplantae</taxon>
        <taxon>Streptophyta</taxon>
        <taxon>Embryophyta</taxon>
        <taxon>Tracheophyta</taxon>
        <taxon>Spermatophyta</taxon>
        <taxon>Magnoliopsida</taxon>
        <taxon>eudicotyledons</taxon>
        <taxon>Gunneridae</taxon>
        <taxon>Pentapetalae</taxon>
        <taxon>rosids</taxon>
        <taxon>fabids</taxon>
        <taxon>Fabales</taxon>
        <taxon>Fabaceae</taxon>
        <taxon>Papilionoideae</taxon>
        <taxon>50 kb inversion clade</taxon>
        <taxon>NPAAA clade</taxon>
        <taxon>indigoferoid/millettioid clade</taxon>
        <taxon>Phaseoleae</taxon>
        <taxon>Glycine</taxon>
        <taxon>Glycine subgen. Glycine</taxon>
    </lineage>
</organism>
<evidence type="ECO:0000255" key="1">
    <source>
        <dbReference type="HAMAP-Rule" id="MF_00860"/>
    </source>
</evidence>
<sequence length="178" mass="20018">MASSMISSPAVTTVNRAGAGTVAPFTGLKSMAGFPTRKTNNDIASIASNGGRVQCMQVWPTTGKKKFETLSYLPDLDDAQLAKEVEYLLRKGWIPCLEFELEHGFVYREHHRSPGYYDGRYWTMWKLPMFGCTDASQVLKELQEAKTAYPNAFIRIIGFDNVRQVQCISFIAYKPPSF</sequence>